<accession>Q735E5</accession>
<evidence type="ECO:0000255" key="1">
    <source>
        <dbReference type="HAMAP-Rule" id="MF_01624"/>
    </source>
</evidence>
<dbReference type="EC" id="1.20.4.4" evidence="1"/>
<dbReference type="EMBL" id="AE017194">
    <property type="protein sequence ID" value="AAS42117.1"/>
    <property type="molecule type" value="Genomic_DNA"/>
</dbReference>
<dbReference type="SMR" id="Q735E5"/>
<dbReference type="KEGG" id="bca:BCE_3207"/>
<dbReference type="HOGENOM" id="CLU_071415_3_2_9"/>
<dbReference type="Proteomes" id="UP000002527">
    <property type="component" value="Chromosome"/>
</dbReference>
<dbReference type="GO" id="GO:0005737">
    <property type="term" value="C:cytoplasm"/>
    <property type="evidence" value="ECO:0007669"/>
    <property type="project" value="UniProtKB-SubCell"/>
</dbReference>
<dbReference type="GO" id="GO:0030612">
    <property type="term" value="F:arsenate reductase (thioredoxin) activity"/>
    <property type="evidence" value="ECO:0007669"/>
    <property type="project" value="UniProtKB-UniRule"/>
</dbReference>
<dbReference type="GO" id="GO:0004725">
    <property type="term" value="F:protein tyrosine phosphatase activity"/>
    <property type="evidence" value="ECO:0007669"/>
    <property type="project" value="InterPro"/>
</dbReference>
<dbReference type="GO" id="GO:0046685">
    <property type="term" value="P:response to arsenic-containing substance"/>
    <property type="evidence" value="ECO:0007669"/>
    <property type="project" value="UniProtKB-KW"/>
</dbReference>
<dbReference type="CDD" id="cd16345">
    <property type="entry name" value="LMWP_ArsC"/>
    <property type="match status" value="1"/>
</dbReference>
<dbReference type="FunFam" id="3.40.50.2300:FF:000237">
    <property type="entry name" value="Arsenate reductase"/>
    <property type="match status" value="1"/>
</dbReference>
<dbReference type="Gene3D" id="3.40.50.2300">
    <property type="match status" value="1"/>
</dbReference>
<dbReference type="HAMAP" id="MF_01624">
    <property type="entry name" value="Arsenate_reduct"/>
    <property type="match status" value="1"/>
</dbReference>
<dbReference type="InterPro" id="IPR014064">
    <property type="entry name" value="Arsenate_reductase_ArsC"/>
</dbReference>
<dbReference type="InterPro" id="IPR023485">
    <property type="entry name" value="Ptyr_pPase"/>
</dbReference>
<dbReference type="InterPro" id="IPR036196">
    <property type="entry name" value="Ptyr_pPase_sf"/>
</dbReference>
<dbReference type="NCBIfam" id="TIGR02691">
    <property type="entry name" value="arsC_pI258_fam"/>
    <property type="match status" value="1"/>
</dbReference>
<dbReference type="NCBIfam" id="NF010053">
    <property type="entry name" value="PRK13530.1"/>
    <property type="match status" value="1"/>
</dbReference>
<dbReference type="PANTHER" id="PTHR43428">
    <property type="entry name" value="ARSENATE REDUCTASE"/>
    <property type="match status" value="1"/>
</dbReference>
<dbReference type="PANTHER" id="PTHR43428:SF1">
    <property type="entry name" value="ARSENATE REDUCTASE"/>
    <property type="match status" value="1"/>
</dbReference>
<dbReference type="Pfam" id="PF01451">
    <property type="entry name" value="LMWPc"/>
    <property type="match status" value="1"/>
</dbReference>
<dbReference type="SMART" id="SM00226">
    <property type="entry name" value="LMWPc"/>
    <property type="match status" value="1"/>
</dbReference>
<dbReference type="SUPFAM" id="SSF52788">
    <property type="entry name" value="Phosphotyrosine protein phosphatases I"/>
    <property type="match status" value="1"/>
</dbReference>
<reference key="1">
    <citation type="journal article" date="2004" name="Nucleic Acids Res.">
        <title>The genome sequence of Bacillus cereus ATCC 10987 reveals metabolic adaptations and a large plasmid related to Bacillus anthracis pXO1.</title>
        <authorList>
            <person name="Rasko D.A."/>
            <person name="Ravel J."/>
            <person name="Oekstad O.A."/>
            <person name="Helgason E."/>
            <person name="Cer R.Z."/>
            <person name="Jiang L."/>
            <person name="Shores K.A."/>
            <person name="Fouts D.E."/>
            <person name="Tourasse N.J."/>
            <person name="Angiuoli S.V."/>
            <person name="Kolonay J.F."/>
            <person name="Nelson W.C."/>
            <person name="Kolstoe A.-B."/>
            <person name="Fraser C.M."/>
            <person name="Read T.D."/>
        </authorList>
    </citation>
    <scope>NUCLEOTIDE SEQUENCE [LARGE SCALE GENOMIC DNA]</scope>
    <source>
        <strain>ATCC 10987 / NRS 248</strain>
    </source>
</reference>
<gene>
    <name evidence="1" type="primary">arsC2</name>
    <name type="ordered locus">BCE_3207</name>
</gene>
<protein>
    <recommendedName>
        <fullName evidence="1">Arsenate reductase 2</fullName>
        <ecNumber evidence="1">1.20.4.4</ecNumber>
    </recommendedName>
</protein>
<organism>
    <name type="scientific">Bacillus cereus (strain ATCC 10987 / NRS 248)</name>
    <dbReference type="NCBI Taxonomy" id="222523"/>
    <lineage>
        <taxon>Bacteria</taxon>
        <taxon>Bacillati</taxon>
        <taxon>Bacillota</taxon>
        <taxon>Bacilli</taxon>
        <taxon>Bacillales</taxon>
        <taxon>Bacillaceae</taxon>
        <taxon>Bacillus</taxon>
        <taxon>Bacillus cereus group</taxon>
    </lineage>
</organism>
<proteinExistence type="inferred from homology"/>
<name>ARSC2_BACC1</name>
<sequence>MENKKTIYFLCTGNSCRSQMAEAWGKQYLGDKWNVYSAGIEAHGVNPNAIKAMNEVNIDITNQTSDIIDANILNRADLVVTLCSHADSVCPSTPPHINRVHWGFDDPAGKEWSEFQRVRDEIGERIKRFSETGE</sequence>
<feature type="chain" id="PRO_0000162513" description="Arsenate reductase 2">
    <location>
        <begin position="1"/>
        <end position="134"/>
    </location>
</feature>
<feature type="active site" description="Nucleophile" evidence="1">
    <location>
        <position position="11"/>
    </location>
</feature>
<feature type="active site" description="Nucleophile" evidence="1">
    <location>
        <position position="83"/>
    </location>
</feature>
<feature type="active site" description="Nucleophile" evidence="1">
    <location>
        <position position="90"/>
    </location>
</feature>
<feature type="disulfide bond" description="Redox-active; alternate" evidence="1">
    <location>
        <begin position="11"/>
        <end position="83"/>
    </location>
</feature>
<feature type="disulfide bond" description="Redox-active; alternate" evidence="1">
    <location>
        <begin position="83"/>
        <end position="90"/>
    </location>
</feature>
<keyword id="KW-0059">Arsenical resistance</keyword>
<keyword id="KW-0963">Cytoplasm</keyword>
<keyword id="KW-1015">Disulfide bond</keyword>
<keyword id="KW-0560">Oxidoreductase</keyword>
<keyword id="KW-0676">Redox-active center</keyword>
<comment type="function">
    <text evidence="1">Catalyzes the reduction of arsenate [As(V)] to arsenite [As(III)].</text>
</comment>
<comment type="catalytic activity">
    <reaction evidence="1">
        <text>arsenate + [thioredoxin]-dithiol + H(+) = arsenite + [thioredoxin]-disulfide + H2O</text>
        <dbReference type="Rhea" id="RHEA:43848"/>
        <dbReference type="Rhea" id="RHEA-COMP:10698"/>
        <dbReference type="Rhea" id="RHEA-COMP:10700"/>
        <dbReference type="ChEBI" id="CHEBI:15377"/>
        <dbReference type="ChEBI" id="CHEBI:15378"/>
        <dbReference type="ChEBI" id="CHEBI:29242"/>
        <dbReference type="ChEBI" id="CHEBI:29950"/>
        <dbReference type="ChEBI" id="CHEBI:48597"/>
        <dbReference type="ChEBI" id="CHEBI:50058"/>
        <dbReference type="EC" id="1.20.4.4"/>
    </reaction>
</comment>
<comment type="subcellular location">
    <subcellularLocation>
        <location evidence="1">Cytoplasm</location>
    </subcellularLocation>
</comment>
<comment type="similarity">
    <text evidence="1">Belongs to the low molecular weight phosphotyrosine protein phosphatase family. Thioredoxin-coupled ArsC subfamily.</text>
</comment>